<evidence type="ECO:0000255" key="1">
    <source>
        <dbReference type="HAMAP-Rule" id="MF_01605"/>
    </source>
</evidence>
<reference key="1">
    <citation type="journal article" date="2003" name="Nat. Biotechnol.">
        <title>The genome sequence of the entomopathogenic bacterium Photorhabdus luminescens.</title>
        <authorList>
            <person name="Duchaud E."/>
            <person name="Rusniok C."/>
            <person name="Frangeul L."/>
            <person name="Buchrieser C."/>
            <person name="Givaudan A."/>
            <person name="Taourit S."/>
            <person name="Bocs S."/>
            <person name="Boursaux-Eude C."/>
            <person name="Chandler M."/>
            <person name="Charles J.-F."/>
            <person name="Dassa E."/>
            <person name="Derose R."/>
            <person name="Derzelle S."/>
            <person name="Freyssinet G."/>
            <person name="Gaudriault S."/>
            <person name="Medigue C."/>
            <person name="Lanois A."/>
            <person name="Powell K."/>
            <person name="Siguier P."/>
            <person name="Vincent R."/>
            <person name="Wingate V."/>
            <person name="Zouine M."/>
            <person name="Glaser P."/>
            <person name="Boemare N."/>
            <person name="Danchin A."/>
            <person name="Kunst F."/>
        </authorList>
    </citation>
    <scope>NUCLEOTIDE SEQUENCE [LARGE SCALE GENOMIC DNA]</scope>
    <source>
        <strain>DSM 15139 / CIP 105565 / TT01</strain>
    </source>
</reference>
<proteinExistence type="inferred from homology"/>
<gene>
    <name evidence="1" type="primary">pgl</name>
    <name type="ordered locus">plu1480</name>
</gene>
<accession>Q7N6R1</accession>
<feature type="chain" id="PRO_0000171136" description="6-phosphogluconolactonase">
    <location>
        <begin position="1"/>
        <end position="328"/>
    </location>
</feature>
<keyword id="KW-0119">Carbohydrate metabolism</keyword>
<keyword id="KW-0313">Glucose metabolism</keyword>
<keyword id="KW-0378">Hydrolase</keyword>
<keyword id="KW-1185">Reference proteome</keyword>
<protein>
    <recommendedName>
        <fullName evidence="1">6-phosphogluconolactonase</fullName>
        <shortName evidence="1">6-P-gluconolactonase</shortName>
        <ecNumber evidence="1">3.1.1.31</ecNumber>
    </recommendedName>
</protein>
<sequence length="328" mass="36427">MKQVVYTASPNSCQIHVWSLNNEGELSLIQTVDVPGEVQPMVVSPDRKHLYVGIRPQFSIVTYQIGSRGELAQQGISSIPGSPTHISTDKQGRFLFSASYSYNNLSVSLIDDQGIVGEPVQVIAGLQAPHSANIDWDNKQLLVPCLKEDRVRIFEMAKEGYLTEKRAEEITTAMGAGPRHMAFHPNQQVIYCINELDSTVDVYRKWEKYRTVQTVDSLPADLAGVRWSADIHITPDGRHLYTSERTSSLISHFVISQDGSNLTLAGHYKTEIQPRGFAIDHSGKYLIASGQKSDHISVSSIDKYTGKLTELTRYPVGKGPMWVTVLAL</sequence>
<organism>
    <name type="scientific">Photorhabdus laumondii subsp. laumondii (strain DSM 15139 / CIP 105565 / TT01)</name>
    <name type="common">Photorhabdus luminescens subsp. laumondii</name>
    <dbReference type="NCBI Taxonomy" id="243265"/>
    <lineage>
        <taxon>Bacteria</taxon>
        <taxon>Pseudomonadati</taxon>
        <taxon>Pseudomonadota</taxon>
        <taxon>Gammaproteobacteria</taxon>
        <taxon>Enterobacterales</taxon>
        <taxon>Morganellaceae</taxon>
        <taxon>Photorhabdus</taxon>
    </lineage>
</organism>
<comment type="function">
    <text evidence="1">Catalyzes the hydrolysis of 6-phosphogluconolactone to 6-phosphogluconate.</text>
</comment>
<comment type="catalytic activity">
    <reaction evidence="1">
        <text>6-phospho-D-glucono-1,5-lactone + H2O = 6-phospho-D-gluconate + H(+)</text>
        <dbReference type="Rhea" id="RHEA:12556"/>
        <dbReference type="ChEBI" id="CHEBI:15377"/>
        <dbReference type="ChEBI" id="CHEBI:15378"/>
        <dbReference type="ChEBI" id="CHEBI:57955"/>
        <dbReference type="ChEBI" id="CHEBI:58759"/>
        <dbReference type="EC" id="3.1.1.31"/>
    </reaction>
</comment>
<comment type="pathway">
    <text evidence="1">Carbohydrate degradation; pentose phosphate pathway; D-ribulose 5-phosphate from D-glucose 6-phosphate (oxidative stage): step 2/3.</text>
</comment>
<comment type="similarity">
    <text evidence="1">Belongs to the cycloisomerase 2 family.</text>
</comment>
<name>6PGL_PHOLL</name>
<dbReference type="EC" id="3.1.1.31" evidence="1"/>
<dbReference type="EMBL" id="BX571864">
    <property type="protein sequence ID" value="CAE13773.1"/>
    <property type="molecule type" value="Genomic_DNA"/>
</dbReference>
<dbReference type="RefSeq" id="WP_011145783.1">
    <property type="nucleotide sequence ID" value="NC_005126.1"/>
</dbReference>
<dbReference type="SMR" id="Q7N6R1"/>
<dbReference type="STRING" id="243265.plu1480"/>
<dbReference type="GeneID" id="48847771"/>
<dbReference type="KEGG" id="plu:plu1480"/>
<dbReference type="eggNOG" id="COG2706">
    <property type="taxonomic scope" value="Bacteria"/>
</dbReference>
<dbReference type="HOGENOM" id="CLU_038716_2_0_6"/>
<dbReference type="OrthoDB" id="9790815at2"/>
<dbReference type="UniPathway" id="UPA00115">
    <property type="reaction ID" value="UER00409"/>
</dbReference>
<dbReference type="Proteomes" id="UP000002514">
    <property type="component" value="Chromosome"/>
</dbReference>
<dbReference type="GO" id="GO:0005829">
    <property type="term" value="C:cytosol"/>
    <property type="evidence" value="ECO:0007669"/>
    <property type="project" value="TreeGrafter"/>
</dbReference>
<dbReference type="GO" id="GO:0017057">
    <property type="term" value="F:6-phosphogluconolactonase activity"/>
    <property type="evidence" value="ECO:0007669"/>
    <property type="project" value="UniProtKB-UniRule"/>
</dbReference>
<dbReference type="GO" id="GO:0006006">
    <property type="term" value="P:glucose metabolic process"/>
    <property type="evidence" value="ECO:0007669"/>
    <property type="project" value="UniProtKB-KW"/>
</dbReference>
<dbReference type="GO" id="GO:0009051">
    <property type="term" value="P:pentose-phosphate shunt, oxidative branch"/>
    <property type="evidence" value="ECO:0007669"/>
    <property type="project" value="UniProtKB-UniRule"/>
</dbReference>
<dbReference type="Gene3D" id="2.130.10.10">
    <property type="entry name" value="YVTN repeat-like/Quinoprotein amine dehydrogenase"/>
    <property type="match status" value="1"/>
</dbReference>
<dbReference type="HAMAP" id="MF_01605">
    <property type="entry name" value="6P_gluconolactonase"/>
    <property type="match status" value="1"/>
</dbReference>
<dbReference type="InterPro" id="IPR022528">
    <property type="entry name" value="6-phosphogluconolactonase_YbhE"/>
</dbReference>
<dbReference type="InterPro" id="IPR050282">
    <property type="entry name" value="Cycloisomerase_2"/>
</dbReference>
<dbReference type="InterPro" id="IPR019405">
    <property type="entry name" value="Lactonase_7-beta_prop"/>
</dbReference>
<dbReference type="InterPro" id="IPR011045">
    <property type="entry name" value="N2O_reductase_N"/>
</dbReference>
<dbReference type="InterPro" id="IPR015943">
    <property type="entry name" value="WD40/YVTN_repeat-like_dom_sf"/>
</dbReference>
<dbReference type="NCBIfam" id="NF008258">
    <property type="entry name" value="PRK11028.1"/>
    <property type="match status" value="1"/>
</dbReference>
<dbReference type="PANTHER" id="PTHR30344:SF1">
    <property type="entry name" value="6-PHOSPHOGLUCONOLACTONASE"/>
    <property type="match status" value="1"/>
</dbReference>
<dbReference type="PANTHER" id="PTHR30344">
    <property type="entry name" value="6-PHOSPHOGLUCONOLACTONASE-RELATED"/>
    <property type="match status" value="1"/>
</dbReference>
<dbReference type="Pfam" id="PF10282">
    <property type="entry name" value="Lactonase"/>
    <property type="match status" value="1"/>
</dbReference>
<dbReference type="SUPFAM" id="SSF50974">
    <property type="entry name" value="Nitrous oxide reductase, N-terminal domain"/>
    <property type="match status" value="1"/>
</dbReference>